<feature type="chain" id="PRO_0000065578" description="Uncharacterized protein from transposable element Tc1">
    <location>
        <begin position="1"/>
        <end position="112"/>
    </location>
</feature>
<protein>
    <recommendedName>
        <fullName>Uncharacterized protein from transposable element Tc1</fullName>
    </recommendedName>
</protein>
<proteinExistence type="predicted"/>
<reference key="1">
    <citation type="journal article" date="1983" name="Nucleic Acids Res.">
        <title>Sequence of the C. elegans transposable element Tc1.</title>
        <authorList>
            <person name="Rosenzweig B."/>
            <person name="Liao L.W."/>
            <person name="Hirsh D."/>
        </authorList>
    </citation>
    <scope>NUCLEOTIDE SEQUENCE [GENOMIC DNA]</scope>
</reference>
<name>Y122_CAEEL</name>
<accession>P03935</accession>
<keyword id="KW-0814">Transposable element</keyword>
<organism>
    <name type="scientific">Caenorhabditis elegans</name>
    <dbReference type="NCBI Taxonomy" id="6239"/>
    <lineage>
        <taxon>Eukaryota</taxon>
        <taxon>Metazoa</taxon>
        <taxon>Ecdysozoa</taxon>
        <taxon>Nematoda</taxon>
        <taxon>Chromadorea</taxon>
        <taxon>Rhabditida</taxon>
        <taxon>Rhabditina</taxon>
        <taxon>Rhabditomorpha</taxon>
        <taxon>Rhabditoidea</taxon>
        <taxon>Rhabditidae</taxon>
        <taxon>Peloderinae</taxon>
        <taxon>Caenorhabditis</taxon>
    </lineage>
</organism>
<sequence>MNLYQVNELFVDVYSKQDYTDESQSRNRSSVRKIAWLELRGQKRIFVGDVRNGLNTSGLTKASSICSGVMEIPGYVVLLALGTLQSINAQPLSMEVGASWCGGASPALPWAH</sequence>
<dbReference type="EMBL" id="X01005">
    <property type="protein sequence ID" value="CAA25499.1"/>
    <property type="molecule type" value="Genomic_DNA"/>
</dbReference>
<dbReference type="PIR" id="A04521">
    <property type="entry name" value="QQKWTB"/>
</dbReference>